<comment type="function">
    <text evidence="1">Produces ATP from ADP in the presence of a proton gradient across the membrane. The catalytic sites are hosted primarily by the beta subunits.</text>
</comment>
<comment type="catalytic activity">
    <reaction evidence="1">
        <text>ATP + H2O + 4 H(+)(in) = ADP + phosphate + 5 H(+)(out)</text>
        <dbReference type="Rhea" id="RHEA:57720"/>
        <dbReference type="ChEBI" id="CHEBI:15377"/>
        <dbReference type="ChEBI" id="CHEBI:15378"/>
        <dbReference type="ChEBI" id="CHEBI:30616"/>
        <dbReference type="ChEBI" id="CHEBI:43474"/>
        <dbReference type="ChEBI" id="CHEBI:456216"/>
        <dbReference type="EC" id="7.1.2.2"/>
    </reaction>
</comment>
<comment type="subunit">
    <text evidence="1">F-type ATPases have 2 components, CF(1) - the catalytic core - and CF(0) - the membrane proton channel. CF(1) has five subunits: alpha(3), beta(3), gamma(1), delta(1), epsilon(1). CF(0) has four main subunits: a(1), b(1), b'(1) and c(9-12).</text>
</comment>
<comment type="subcellular location">
    <subcellularLocation>
        <location evidence="1">Plastid</location>
        <location evidence="1">Chloroplast thylakoid membrane</location>
        <topology evidence="1">Peripheral membrane protein</topology>
    </subcellularLocation>
</comment>
<comment type="similarity">
    <text evidence="1">Belongs to the ATPase alpha/beta chains family.</text>
</comment>
<name>ATPB_SCISI</name>
<sequence>MRINPTTSGSTVPTLEEKNLGRIAQIIGPVLDVVFPPGKMPNIYNALVVKGRDTVGQQINVTCEVQQLLGNNRVRAVAMSATDGLTRGMEVIDTGAALSVPVGGATLGRIFNVLGEPVDNLGPVDTRTTSPIHRSAPAFIQLDTKLSIFETGIKVVDLLAPYRRGGKIGLFGGAGVGKTVLIMELINNIAKAHGGVSVFGGVGERTREGNDLYMEMKESGVINEKNIAESKVALVYGQMNEPPGARMRVGLTALTMAEYFRDVNEQDVLLFIDNIFRFVQAGSEVSALLGRMPSAVGYQPTLSTEMGSLQERITSTKEGSITSIQAVYVPADDLTDPAPATTFAHLDATTVLSRGLSAKGIYPAVDPLDSTSTMLQPRIVGEEHYETAQRVKQTLQRYKELQDIIAILGLDELSEEDRLTVARARKIERFLSQPFFVAEVFTGSPGKYVGLAETIRGFQLILSGELDGLPEQAFYLVGNIDEATAKAMNLEGEKK</sequence>
<feature type="chain" id="PRO_0000254507" description="ATP synthase subunit beta, chloroplastic">
    <location>
        <begin position="1"/>
        <end position="495"/>
    </location>
</feature>
<feature type="binding site" evidence="1">
    <location>
        <begin position="172"/>
        <end position="179"/>
    </location>
    <ligand>
        <name>ATP</name>
        <dbReference type="ChEBI" id="CHEBI:30616"/>
    </ligand>
</feature>
<accession>Q85V29</accession>
<dbReference type="EC" id="7.1.2.2" evidence="1"/>
<dbReference type="EMBL" id="AJ508214">
    <property type="protein sequence ID" value="CAD48411.1"/>
    <property type="molecule type" value="Genomic_DNA"/>
</dbReference>
<dbReference type="SMR" id="Q85V29"/>
<dbReference type="GO" id="GO:0009535">
    <property type="term" value="C:chloroplast thylakoid membrane"/>
    <property type="evidence" value="ECO:0007669"/>
    <property type="project" value="UniProtKB-SubCell"/>
</dbReference>
<dbReference type="GO" id="GO:0005739">
    <property type="term" value="C:mitochondrion"/>
    <property type="evidence" value="ECO:0007669"/>
    <property type="project" value="GOC"/>
</dbReference>
<dbReference type="GO" id="GO:0045259">
    <property type="term" value="C:proton-transporting ATP synthase complex"/>
    <property type="evidence" value="ECO:0007669"/>
    <property type="project" value="UniProtKB-KW"/>
</dbReference>
<dbReference type="GO" id="GO:0005524">
    <property type="term" value="F:ATP binding"/>
    <property type="evidence" value="ECO:0007669"/>
    <property type="project" value="UniProtKB-UniRule"/>
</dbReference>
<dbReference type="GO" id="GO:0016887">
    <property type="term" value="F:ATP hydrolysis activity"/>
    <property type="evidence" value="ECO:0007669"/>
    <property type="project" value="InterPro"/>
</dbReference>
<dbReference type="GO" id="GO:0046933">
    <property type="term" value="F:proton-transporting ATP synthase activity, rotational mechanism"/>
    <property type="evidence" value="ECO:0007669"/>
    <property type="project" value="UniProtKB-UniRule"/>
</dbReference>
<dbReference type="GO" id="GO:0042776">
    <property type="term" value="P:proton motive force-driven mitochondrial ATP synthesis"/>
    <property type="evidence" value="ECO:0007669"/>
    <property type="project" value="TreeGrafter"/>
</dbReference>
<dbReference type="CDD" id="cd18110">
    <property type="entry name" value="ATP-synt_F1_beta_C"/>
    <property type="match status" value="1"/>
</dbReference>
<dbReference type="CDD" id="cd18115">
    <property type="entry name" value="ATP-synt_F1_beta_N"/>
    <property type="match status" value="1"/>
</dbReference>
<dbReference type="CDD" id="cd01133">
    <property type="entry name" value="F1-ATPase_beta_CD"/>
    <property type="match status" value="1"/>
</dbReference>
<dbReference type="FunFam" id="1.10.1140.10:FF:000001">
    <property type="entry name" value="ATP synthase subunit beta"/>
    <property type="match status" value="1"/>
</dbReference>
<dbReference type="FunFam" id="3.40.50.300:FF:000004">
    <property type="entry name" value="ATP synthase subunit beta"/>
    <property type="match status" value="1"/>
</dbReference>
<dbReference type="FunFam" id="2.40.10.170:FF:000002">
    <property type="entry name" value="ATP synthase subunit beta, chloroplastic"/>
    <property type="match status" value="1"/>
</dbReference>
<dbReference type="Gene3D" id="2.40.10.170">
    <property type="match status" value="1"/>
</dbReference>
<dbReference type="Gene3D" id="1.10.1140.10">
    <property type="entry name" value="Bovine Mitochondrial F1-atpase, Atp Synthase Beta Chain, Chain D, domain 3"/>
    <property type="match status" value="1"/>
</dbReference>
<dbReference type="Gene3D" id="3.40.50.300">
    <property type="entry name" value="P-loop containing nucleotide triphosphate hydrolases"/>
    <property type="match status" value="1"/>
</dbReference>
<dbReference type="HAMAP" id="MF_01347">
    <property type="entry name" value="ATP_synth_beta_bact"/>
    <property type="match status" value="1"/>
</dbReference>
<dbReference type="InterPro" id="IPR003593">
    <property type="entry name" value="AAA+_ATPase"/>
</dbReference>
<dbReference type="InterPro" id="IPR055190">
    <property type="entry name" value="ATP-synt_VA_C"/>
</dbReference>
<dbReference type="InterPro" id="IPR005722">
    <property type="entry name" value="ATP_synth_F1_bsu"/>
</dbReference>
<dbReference type="InterPro" id="IPR020003">
    <property type="entry name" value="ATPase_a/bsu_AS"/>
</dbReference>
<dbReference type="InterPro" id="IPR050053">
    <property type="entry name" value="ATPase_alpha/beta_chains"/>
</dbReference>
<dbReference type="InterPro" id="IPR004100">
    <property type="entry name" value="ATPase_F1/V1/A1_a/bsu_N"/>
</dbReference>
<dbReference type="InterPro" id="IPR036121">
    <property type="entry name" value="ATPase_F1/V1/A1_a/bsu_N_sf"/>
</dbReference>
<dbReference type="InterPro" id="IPR000194">
    <property type="entry name" value="ATPase_F1/V1/A1_a/bsu_nucl-bd"/>
</dbReference>
<dbReference type="InterPro" id="IPR024034">
    <property type="entry name" value="ATPase_F1/V1_b/a_C"/>
</dbReference>
<dbReference type="InterPro" id="IPR027417">
    <property type="entry name" value="P-loop_NTPase"/>
</dbReference>
<dbReference type="NCBIfam" id="TIGR01039">
    <property type="entry name" value="atpD"/>
    <property type="match status" value="1"/>
</dbReference>
<dbReference type="PANTHER" id="PTHR15184">
    <property type="entry name" value="ATP SYNTHASE"/>
    <property type="match status" value="1"/>
</dbReference>
<dbReference type="PANTHER" id="PTHR15184:SF71">
    <property type="entry name" value="ATP SYNTHASE SUBUNIT BETA, MITOCHONDRIAL"/>
    <property type="match status" value="1"/>
</dbReference>
<dbReference type="Pfam" id="PF00006">
    <property type="entry name" value="ATP-synt_ab"/>
    <property type="match status" value="1"/>
</dbReference>
<dbReference type="Pfam" id="PF02874">
    <property type="entry name" value="ATP-synt_ab_N"/>
    <property type="match status" value="1"/>
</dbReference>
<dbReference type="Pfam" id="PF22919">
    <property type="entry name" value="ATP-synt_VA_C"/>
    <property type="match status" value="1"/>
</dbReference>
<dbReference type="SMART" id="SM00382">
    <property type="entry name" value="AAA"/>
    <property type="match status" value="1"/>
</dbReference>
<dbReference type="SUPFAM" id="SSF47917">
    <property type="entry name" value="C-terminal domain of alpha and beta subunits of F1 ATP synthase"/>
    <property type="match status" value="1"/>
</dbReference>
<dbReference type="SUPFAM" id="SSF50615">
    <property type="entry name" value="N-terminal domain of alpha and beta subunits of F1 ATP synthase"/>
    <property type="match status" value="1"/>
</dbReference>
<dbReference type="SUPFAM" id="SSF52540">
    <property type="entry name" value="P-loop containing nucleoside triphosphate hydrolases"/>
    <property type="match status" value="1"/>
</dbReference>
<dbReference type="PROSITE" id="PS00152">
    <property type="entry name" value="ATPASE_ALPHA_BETA"/>
    <property type="match status" value="1"/>
</dbReference>
<organism>
    <name type="scientific">Scilla siberica</name>
    <name type="common">Siberian squill</name>
    <name type="synonym">Othocallis siberica</name>
    <dbReference type="NCBI Taxonomy" id="4702"/>
    <lineage>
        <taxon>Eukaryota</taxon>
        <taxon>Viridiplantae</taxon>
        <taxon>Streptophyta</taxon>
        <taxon>Embryophyta</taxon>
        <taxon>Tracheophyta</taxon>
        <taxon>Spermatophyta</taxon>
        <taxon>Magnoliopsida</taxon>
        <taxon>Liliopsida</taxon>
        <taxon>Asparagales</taxon>
        <taxon>Hyacinthaceae</taxon>
        <taxon>Hyacinthoideae</taxon>
        <taxon>Hyacintheae</taxon>
        <taxon>Scilla</taxon>
    </lineage>
</organism>
<proteinExistence type="inferred from homology"/>
<geneLocation type="chloroplast"/>
<gene>
    <name evidence="1" type="primary">atpB</name>
</gene>
<keyword id="KW-0066">ATP synthesis</keyword>
<keyword id="KW-0067">ATP-binding</keyword>
<keyword id="KW-0139">CF(1)</keyword>
<keyword id="KW-0150">Chloroplast</keyword>
<keyword id="KW-0375">Hydrogen ion transport</keyword>
<keyword id="KW-0406">Ion transport</keyword>
<keyword id="KW-0472">Membrane</keyword>
<keyword id="KW-0547">Nucleotide-binding</keyword>
<keyword id="KW-0934">Plastid</keyword>
<keyword id="KW-0793">Thylakoid</keyword>
<keyword id="KW-1278">Translocase</keyword>
<keyword id="KW-0813">Transport</keyword>
<protein>
    <recommendedName>
        <fullName evidence="1">ATP synthase subunit beta, chloroplastic</fullName>
        <ecNumber evidence="1">7.1.2.2</ecNumber>
    </recommendedName>
    <alternativeName>
        <fullName evidence="1">ATP synthase F1 sector subunit beta</fullName>
    </alternativeName>
    <alternativeName>
        <fullName evidence="1">F-ATPase subunit beta</fullName>
    </alternativeName>
</protein>
<reference key="1">
    <citation type="journal article" date="2003" name="J. Plant Res.">
        <title>Phylogenetic relationships among genera of Massonieae (Hyacinthaceae) inferred from plastid DNA and seed morphology.</title>
        <authorList>
            <person name="Pfosser M.F."/>
            <person name="Wetschnig W."/>
            <person name="Ungar S."/>
            <person name="Prenner G."/>
        </authorList>
    </citation>
    <scope>NUCLEOTIDE SEQUENCE [GENOMIC DNA]</scope>
</reference>
<evidence type="ECO:0000255" key="1">
    <source>
        <dbReference type="HAMAP-Rule" id="MF_01347"/>
    </source>
</evidence>